<comment type="function">
    <text evidence="1">Covalently attaches a chromophore to Cys residue(s) of phycobiliproteins.</text>
</comment>
<comment type="similarity">
    <text evidence="1">Belongs to the CpcT/CpeT biliprotein lyase family.</text>
</comment>
<feature type="chain" id="PRO_0000403155" description="Chromophore lyase CpcT/CpeT 3">
    <location>
        <begin position="1"/>
        <end position="203"/>
    </location>
</feature>
<protein>
    <recommendedName>
        <fullName evidence="1">Chromophore lyase CpcT/CpeT 3</fullName>
        <ecNumber evidence="1">4.-.-.-</ecNumber>
    </recommendedName>
</protein>
<dbReference type="EC" id="4.-.-.-" evidence="1"/>
<dbReference type="EMBL" id="BA000045">
    <property type="protein sequence ID" value="BAC89134.1"/>
    <property type="molecule type" value="Genomic_DNA"/>
</dbReference>
<dbReference type="RefSeq" id="NP_924139.1">
    <property type="nucleotide sequence ID" value="NC_005125.1"/>
</dbReference>
<dbReference type="RefSeq" id="WP_011141193.1">
    <property type="nucleotide sequence ID" value="NC_005125.1"/>
</dbReference>
<dbReference type="SMR" id="Q7NLD3"/>
<dbReference type="STRING" id="251221.gene:10758672"/>
<dbReference type="EnsemblBacteria" id="BAC89134">
    <property type="protein sequence ID" value="BAC89134"/>
    <property type="gene ID" value="BAC89134"/>
</dbReference>
<dbReference type="KEGG" id="gvi:glr1193"/>
<dbReference type="PATRIC" id="fig|251221.4.peg.1217"/>
<dbReference type="eggNOG" id="ENOG502Z8CK">
    <property type="taxonomic scope" value="Bacteria"/>
</dbReference>
<dbReference type="HOGENOM" id="CLU_092589_0_0_3"/>
<dbReference type="InParanoid" id="Q7NLD3"/>
<dbReference type="OrthoDB" id="509174at2"/>
<dbReference type="PhylomeDB" id="Q7NLD3"/>
<dbReference type="Proteomes" id="UP000000557">
    <property type="component" value="Chromosome"/>
</dbReference>
<dbReference type="GO" id="GO:0016829">
    <property type="term" value="F:lyase activity"/>
    <property type="evidence" value="ECO:0007669"/>
    <property type="project" value="UniProtKB-KW"/>
</dbReference>
<dbReference type="CDD" id="cd16338">
    <property type="entry name" value="CpcT"/>
    <property type="match status" value="1"/>
</dbReference>
<dbReference type="Gene3D" id="2.40.128.590">
    <property type="entry name" value="CpcT/CpeT domain"/>
    <property type="match status" value="1"/>
</dbReference>
<dbReference type="HAMAP" id="MF_01460">
    <property type="entry name" value="Chrphore_lyase_CpxT"/>
    <property type="match status" value="1"/>
</dbReference>
<dbReference type="InterPro" id="IPR010404">
    <property type="entry name" value="CpcT/CpeT"/>
</dbReference>
<dbReference type="InterPro" id="IPR038672">
    <property type="entry name" value="CpcT/CpeT_sf"/>
</dbReference>
<dbReference type="PANTHER" id="PTHR35137">
    <property type="entry name" value="CHROMOPHORE LYASE CRL, CHLOROPLASTIC"/>
    <property type="match status" value="1"/>
</dbReference>
<dbReference type="PANTHER" id="PTHR35137:SF1">
    <property type="entry name" value="CHROMOPHORE LYASE CRL, CHLOROPLASTIC"/>
    <property type="match status" value="1"/>
</dbReference>
<dbReference type="Pfam" id="PF06206">
    <property type="entry name" value="CpeT"/>
    <property type="match status" value="1"/>
</dbReference>
<organism>
    <name type="scientific">Gloeobacter violaceus (strain ATCC 29082 / PCC 7421)</name>
    <dbReference type="NCBI Taxonomy" id="251221"/>
    <lineage>
        <taxon>Bacteria</taxon>
        <taxon>Bacillati</taxon>
        <taxon>Cyanobacteriota</taxon>
        <taxon>Cyanophyceae</taxon>
        <taxon>Gloeobacterales</taxon>
        <taxon>Gloeobacteraceae</taxon>
        <taxon>Gloeobacter</taxon>
    </lineage>
</organism>
<accession>Q7NLD3</accession>
<keyword id="KW-0456">Lyase</keyword>
<keyword id="KW-1185">Reference proteome</keyword>
<proteinExistence type="inferred from homology"/>
<name>CPXT3_GLOVI</name>
<sequence>MTTAPSEDLLTLARWMAGDFSNQKQALAQPQTFAHIRVFFRPLPFAFFGTVGFYSEQTYDYDLWSPYRQGLHRLLDREGGIYIENYGLQDAGLYAGAGHDPEILATIPTDCLQPRRGCAMVFRREGDCFRGSVEPGNHCLIPRDGYWTYLVSEVELTESTWVSLDRGMDRETHRQIWGSQAGPLHFEKREGFDPPLPPLGKGG</sequence>
<gene>
    <name evidence="1" type="primary">cpcT3</name>
    <name type="ordered locus">glr1193</name>
</gene>
<evidence type="ECO:0000255" key="1">
    <source>
        <dbReference type="HAMAP-Rule" id="MF_01460"/>
    </source>
</evidence>
<reference key="1">
    <citation type="journal article" date="2003" name="DNA Res.">
        <title>Complete genome structure of Gloeobacter violaceus PCC 7421, a cyanobacterium that lacks thylakoids.</title>
        <authorList>
            <person name="Nakamura Y."/>
            <person name="Kaneko T."/>
            <person name="Sato S."/>
            <person name="Mimuro M."/>
            <person name="Miyashita H."/>
            <person name="Tsuchiya T."/>
            <person name="Sasamoto S."/>
            <person name="Watanabe A."/>
            <person name="Kawashima K."/>
            <person name="Kishida Y."/>
            <person name="Kiyokawa C."/>
            <person name="Kohara M."/>
            <person name="Matsumoto M."/>
            <person name="Matsuno A."/>
            <person name="Nakazaki N."/>
            <person name="Shimpo S."/>
            <person name="Takeuchi C."/>
            <person name="Yamada M."/>
            <person name="Tabata S."/>
        </authorList>
    </citation>
    <scope>NUCLEOTIDE SEQUENCE [LARGE SCALE GENOMIC DNA]</scope>
    <source>
        <strain>ATCC 29082 / PCC 7421</strain>
    </source>
</reference>